<sequence length="549" mass="60995">MDLMQMDKRLDSTEQVVEEIMRIHRSLPARPGIDEVEAAKGLIDNVEKEDQACLEAIARQRKSSEVPGELFMVLQEMKKGYVQFRSKEQIREALKLLDLESVHSLFDDFIQRASNCIASPSSNGSVSSRPPLPPATTTAARSDSQSSLNFSERAPVRPKDMVSRDDSFVTKSKPSSLYSDGFAAPPRRPQILDSTLTTGNDGEKLSLIKLASLIEVSAKKATQEINLQNKLTEQLEWLPDSLGKLSSLTSLDLSENHIVVLPNTIGGLSSLTKLDLHSNRIGQLPESIGELLNLVYLNLGSNQLSSLPSAFSRLVRLEELDLSCNNLPILPESIGSLVSLKKLDVETNDIEEIPYSIGGCSSLIELRADYNKLKALPEAIGKITTLEILSVRYNNIRQLPTTMSSLASLKELDVSFNELESVPESLCFATTLVKLNIGNNFADMVSLPRSIGNLEMLEELDISNNQIRVLPDSFKMLTKLRVFRAQENPLHIPPRDIAEKGPQAVVQYMNDLVETRNAKSLMVKPKKSWVQMCFFSKSNKRKQSSMEIV</sequence>
<dbReference type="EMBL" id="AY849574">
    <property type="protein sequence ID" value="AAW57413.1"/>
    <property type="molecule type" value="mRNA"/>
</dbReference>
<dbReference type="EMBL" id="AL117188">
    <property type="protein sequence ID" value="CAB54875.1"/>
    <property type="molecule type" value="Genomic_DNA"/>
</dbReference>
<dbReference type="EMBL" id="AL161587">
    <property type="protein sequence ID" value="CAB80263.1"/>
    <property type="molecule type" value="Genomic_DNA"/>
</dbReference>
<dbReference type="EMBL" id="CP002687">
    <property type="protein sequence ID" value="AEE86519.1"/>
    <property type="molecule type" value="Genomic_DNA"/>
</dbReference>
<dbReference type="EMBL" id="AY072324">
    <property type="protein sequence ID" value="AAL61931.1"/>
    <property type="molecule type" value="mRNA"/>
</dbReference>
<dbReference type="EMBL" id="AY128730">
    <property type="protein sequence ID" value="AAM91130.1"/>
    <property type="molecule type" value="mRNA"/>
</dbReference>
<dbReference type="PIR" id="T41744">
    <property type="entry name" value="T41744"/>
</dbReference>
<dbReference type="RefSeq" id="NP_195272.1">
    <property type="nucleotide sequence ID" value="NM_119712.6"/>
</dbReference>
<dbReference type="SMR" id="Q9SVW8"/>
<dbReference type="BioGRID" id="14981">
    <property type="interactions" value="7"/>
</dbReference>
<dbReference type="FunCoup" id="Q9SVW8">
    <property type="interactions" value="1096"/>
</dbReference>
<dbReference type="IntAct" id="Q9SVW8">
    <property type="interactions" value="3"/>
</dbReference>
<dbReference type="STRING" id="3702.Q9SVW8"/>
<dbReference type="iPTMnet" id="Q9SVW8"/>
<dbReference type="SwissPalm" id="Q9SVW8"/>
<dbReference type="PaxDb" id="3702-AT4G35470.1"/>
<dbReference type="ProteomicsDB" id="234759"/>
<dbReference type="EnsemblPlants" id="AT4G35470.1">
    <property type="protein sequence ID" value="AT4G35470.1"/>
    <property type="gene ID" value="AT4G35470"/>
</dbReference>
<dbReference type="GeneID" id="829699"/>
<dbReference type="Gramene" id="AT4G35470.1">
    <property type="protein sequence ID" value="AT4G35470.1"/>
    <property type="gene ID" value="AT4G35470"/>
</dbReference>
<dbReference type="KEGG" id="ath:AT4G35470"/>
<dbReference type="Araport" id="AT4G35470"/>
<dbReference type="TAIR" id="AT4G35470">
    <property type="gene designation" value="PIRL4"/>
</dbReference>
<dbReference type="eggNOG" id="KOG0619">
    <property type="taxonomic scope" value="Eukaryota"/>
</dbReference>
<dbReference type="HOGENOM" id="CLU_038753_0_0_1"/>
<dbReference type="InParanoid" id="Q9SVW8"/>
<dbReference type="OMA" id="MCFFSRS"/>
<dbReference type="OrthoDB" id="1668230at2759"/>
<dbReference type="PhylomeDB" id="Q9SVW8"/>
<dbReference type="PRO" id="PR:Q9SVW8"/>
<dbReference type="Proteomes" id="UP000006548">
    <property type="component" value="Chromosome 4"/>
</dbReference>
<dbReference type="ExpressionAtlas" id="Q9SVW8">
    <property type="expression patterns" value="baseline and differential"/>
</dbReference>
<dbReference type="GO" id="GO:0005886">
    <property type="term" value="C:plasma membrane"/>
    <property type="evidence" value="ECO:0007005"/>
    <property type="project" value="TAIR"/>
</dbReference>
<dbReference type="FunFam" id="3.80.10.10:FF:000405">
    <property type="entry name" value="Plant intracellular Ras-group-related LRR protein 4"/>
    <property type="match status" value="1"/>
</dbReference>
<dbReference type="Gene3D" id="3.80.10.10">
    <property type="entry name" value="Ribonuclease Inhibitor"/>
    <property type="match status" value="1"/>
</dbReference>
<dbReference type="InterPro" id="IPR001611">
    <property type="entry name" value="Leu-rich_rpt"/>
</dbReference>
<dbReference type="InterPro" id="IPR003591">
    <property type="entry name" value="Leu-rich_rpt_typical-subtyp"/>
</dbReference>
<dbReference type="InterPro" id="IPR032675">
    <property type="entry name" value="LRR_dom_sf"/>
</dbReference>
<dbReference type="InterPro" id="IPR050216">
    <property type="entry name" value="LRR_domain-containing"/>
</dbReference>
<dbReference type="InterPro" id="IPR055414">
    <property type="entry name" value="LRR_R13L4/SHOC2-like"/>
</dbReference>
<dbReference type="PANTHER" id="PTHR48051">
    <property type="match status" value="1"/>
</dbReference>
<dbReference type="PANTHER" id="PTHR48051:SF54">
    <property type="entry name" value="LEUCINE-RICH REPEAT-CONTAINING PROTEIN"/>
    <property type="match status" value="1"/>
</dbReference>
<dbReference type="Pfam" id="PF00560">
    <property type="entry name" value="LRR_1"/>
    <property type="match status" value="2"/>
</dbReference>
<dbReference type="Pfam" id="PF23598">
    <property type="entry name" value="LRR_14"/>
    <property type="match status" value="1"/>
</dbReference>
<dbReference type="SMART" id="SM00364">
    <property type="entry name" value="LRR_BAC"/>
    <property type="match status" value="9"/>
</dbReference>
<dbReference type="SMART" id="SM00369">
    <property type="entry name" value="LRR_TYP"/>
    <property type="match status" value="8"/>
</dbReference>
<dbReference type="SUPFAM" id="SSF52058">
    <property type="entry name" value="L domain-like"/>
    <property type="match status" value="1"/>
</dbReference>
<dbReference type="PROSITE" id="PS51450">
    <property type="entry name" value="LRR"/>
    <property type="match status" value="9"/>
</dbReference>
<accession>Q9SVW8</accession>
<protein>
    <recommendedName>
        <fullName>Plant intracellular Ras-group-related LRR protein 4</fullName>
    </recommendedName>
</protein>
<gene>
    <name type="primary">PIRL4</name>
    <name type="ordered locus">At4g35470</name>
    <name type="ORF">F15J1.40</name>
</gene>
<evidence type="ECO:0000250" key="1"/>
<evidence type="ECO:0000256" key="2">
    <source>
        <dbReference type="SAM" id="MobiDB-lite"/>
    </source>
</evidence>
<evidence type="ECO:0000269" key="3">
    <source>
    </source>
</evidence>
<evidence type="ECO:0000305" key="4"/>
<evidence type="ECO:0007744" key="5">
    <source>
    </source>
</evidence>
<comment type="function">
    <text evidence="1">Leucine-rich repeat protein that likely mediates protein interactions, possibly in the context of signal transduction.</text>
</comment>
<comment type="tissue specificity">
    <text evidence="3">Widely expressed.</text>
</comment>
<comment type="similarity">
    <text evidence="4">Belongs to the SHOC2 family.</text>
</comment>
<organism>
    <name type="scientific">Arabidopsis thaliana</name>
    <name type="common">Mouse-ear cress</name>
    <dbReference type="NCBI Taxonomy" id="3702"/>
    <lineage>
        <taxon>Eukaryota</taxon>
        <taxon>Viridiplantae</taxon>
        <taxon>Streptophyta</taxon>
        <taxon>Embryophyta</taxon>
        <taxon>Tracheophyta</taxon>
        <taxon>Spermatophyta</taxon>
        <taxon>Magnoliopsida</taxon>
        <taxon>eudicotyledons</taxon>
        <taxon>Gunneridae</taxon>
        <taxon>Pentapetalae</taxon>
        <taxon>rosids</taxon>
        <taxon>malvids</taxon>
        <taxon>Brassicales</taxon>
        <taxon>Brassicaceae</taxon>
        <taxon>Camelineae</taxon>
        <taxon>Arabidopsis</taxon>
    </lineage>
</organism>
<feature type="chain" id="PRO_0000423604" description="Plant intracellular Ras-group-related LRR protein 4">
    <location>
        <begin position="1"/>
        <end position="549"/>
    </location>
</feature>
<feature type="repeat" description="LRR 1">
    <location>
        <begin position="245"/>
        <end position="268"/>
    </location>
</feature>
<feature type="repeat" description="LRR 2">
    <location>
        <begin position="269"/>
        <end position="291"/>
    </location>
</feature>
<feature type="repeat" description="LRR 3">
    <location>
        <begin position="293"/>
        <end position="313"/>
    </location>
</feature>
<feature type="repeat" description="LRR 4">
    <location>
        <begin position="314"/>
        <end position="337"/>
    </location>
</feature>
<feature type="repeat" description="LRR 5">
    <location>
        <begin position="339"/>
        <end position="360"/>
    </location>
</feature>
<feature type="repeat" description="LRR 6">
    <location>
        <begin position="362"/>
        <end position="383"/>
    </location>
</feature>
<feature type="repeat" description="LRR 7">
    <location>
        <begin position="384"/>
        <end position="406"/>
    </location>
</feature>
<feature type="repeat" description="LRR 8">
    <location>
        <begin position="407"/>
        <end position="430"/>
    </location>
</feature>
<feature type="repeat" description="LRR 9">
    <location>
        <begin position="432"/>
        <end position="454"/>
    </location>
</feature>
<feature type="repeat" description="LRR 10">
    <location>
        <begin position="455"/>
        <end position="476"/>
    </location>
</feature>
<feature type="repeat" description="LRR 11">
    <location>
        <begin position="478"/>
        <end position="500"/>
    </location>
</feature>
<feature type="region of interest" description="Disordered" evidence="2">
    <location>
        <begin position="119"/>
        <end position="167"/>
    </location>
</feature>
<feature type="short sequence motif" description="GVYW; degenerate">
    <location>
        <begin position="501"/>
        <end position="508"/>
    </location>
</feature>
<feature type="compositionally biased region" description="Low complexity" evidence="2">
    <location>
        <begin position="119"/>
        <end position="140"/>
    </location>
</feature>
<feature type="compositionally biased region" description="Polar residues" evidence="2">
    <location>
        <begin position="141"/>
        <end position="150"/>
    </location>
</feature>
<feature type="compositionally biased region" description="Basic and acidic residues" evidence="2">
    <location>
        <begin position="154"/>
        <end position="167"/>
    </location>
</feature>
<feature type="modified residue" description="Phosphoserine" evidence="5">
    <location>
        <position position="167"/>
    </location>
</feature>
<proteinExistence type="evidence at protein level"/>
<keyword id="KW-0433">Leucine-rich repeat</keyword>
<keyword id="KW-0597">Phosphoprotein</keyword>
<keyword id="KW-1185">Reference proteome</keyword>
<keyword id="KW-0677">Repeat</keyword>
<reference key="1">
    <citation type="journal article" date="2005" name="Plant Cell Physiol.">
        <title>PIRLs: a novel class of plant intracellular leucine-rich repeat proteins.</title>
        <authorList>
            <person name="Forsthoefel N.R."/>
            <person name="Cutler K."/>
            <person name="Port M.D."/>
            <person name="Yamamoto T."/>
            <person name="Vernon D.M."/>
        </authorList>
    </citation>
    <scope>NUCLEOTIDE SEQUENCE [MRNA]</scope>
    <scope>GENE FAMILY</scope>
    <scope>MOTIF GVYW</scope>
    <scope>TISSUE SPECIFICITY</scope>
</reference>
<reference key="2">
    <citation type="journal article" date="1999" name="Nature">
        <title>Sequence and analysis of chromosome 4 of the plant Arabidopsis thaliana.</title>
        <authorList>
            <person name="Mayer K.F.X."/>
            <person name="Schueller C."/>
            <person name="Wambutt R."/>
            <person name="Murphy G."/>
            <person name="Volckaert G."/>
            <person name="Pohl T."/>
            <person name="Duesterhoeft A."/>
            <person name="Stiekema W."/>
            <person name="Entian K.-D."/>
            <person name="Terryn N."/>
            <person name="Harris B."/>
            <person name="Ansorge W."/>
            <person name="Brandt P."/>
            <person name="Grivell L.A."/>
            <person name="Rieger M."/>
            <person name="Weichselgartner M."/>
            <person name="de Simone V."/>
            <person name="Obermaier B."/>
            <person name="Mache R."/>
            <person name="Mueller M."/>
            <person name="Kreis M."/>
            <person name="Delseny M."/>
            <person name="Puigdomenech P."/>
            <person name="Watson M."/>
            <person name="Schmidtheini T."/>
            <person name="Reichert B."/>
            <person name="Portetelle D."/>
            <person name="Perez-Alonso M."/>
            <person name="Boutry M."/>
            <person name="Bancroft I."/>
            <person name="Vos P."/>
            <person name="Hoheisel J."/>
            <person name="Zimmermann W."/>
            <person name="Wedler H."/>
            <person name="Ridley P."/>
            <person name="Langham S.-A."/>
            <person name="McCullagh B."/>
            <person name="Bilham L."/>
            <person name="Robben J."/>
            <person name="van der Schueren J."/>
            <person name="Grymonprez B."/>
            <person name="Chuang Y.-J."/>
            <person name="Vandenbussche F."/>
            <person name="Braeken M."/>
            <person name="Weltjens I."/>
            <person name="Voet M."/>
            <person name="Bastiaens I."/>
            <person name="Aert R."/>
            <person name="Defoor E."/>
            <person name="Weitzenegger T."/>
            <person name="Bothe G."/>
            <person name="Ramsperger U."/>
            <person name="Hilbert H."/>
            <person name="Braun M."/>
            <person name="Holzer E."/>
            <person name="Brandt A."/>
            <person name="Peters S."/>
            <person name="van Staveren M."/>
            <person name="Dirkse W."/>
            <person name="Mooijman P."/>
            <person name="Klein Lankhorst R."/>
            <person name="Rose M."/>
            <person name="Hauf J."/>
            <person name="Koetter P."/>
            <person name="Berneiser S."/>
            <person name="Hempel S."/>
            <person name="Feldpausch M."/>
            <person name="Lamberth S."/>
            <person name="Van den Daele H."/>
            <person name="De Keyser A."/>
            <person name="Buysshaert C."/>
            <person name="Gielen J."/>
            <person name="Villarroel R."/>
            <person name="De Clercq R."/>
            <person name="van Montagu M."/>
            <person name="Rogers J."/>
            <person name="Cronin A."/>
            <person name="Quail M.A."/>
            <person name="Bray-Allen S."/>
            <person name="Clark L."/>
            <person name="Doggett J."/>
            <person name="Hall S."/>
            <person name="Kay M."/>
            <person name="Lennard N."/>
            <person name="McLay K."/>
            <person name="Mayes R."/>
            <person name="Pettett A."/>
            <person name="Rajandream M.A."/>
            <person name="Lyne M."/>
            <person name="Benes V."/>
            <person name="Rechmann S."/>
            <person name="Borkova D."/>
            <person name="Bloecker H."/>
            <person name="Scharfe M."/>
            <person name="Grimm M."/>
            <person name="Loehnert T.-H."/>
            <person name="Dose S."/>
            <person name="de Haan M."/>
            <person name="Maarse A.C."/>
            <person name="Schaefer M."/>
            <person name="Mueller-Auer S."/>
            <person name="Gabel C."/>
            <person name="Fuchs M."/>
            <person name="Fartmann B."/>
            <person name="Granderath K."/>
            <person name="Dauner D."/>
            <person name="Herzl A."/>
            <person name="Neumann S."/>
            <person name="Argiriou A."/>
            <person name="Vitale D."/>
            <person name="Liguori R."/>
            <person name="Piravandi E."/>
            <person name="Massenet O."/>
            <person name="Quigley F."/>
            <person name="Clabauld G."/>
            <person name="Muendlein A."/>
            <person name="Felber R."/>
            <person name="Schnabl S."/>
            <person name="Hiller R."/>
            <person name="Schmidt W."/>
            <person name="Lecharny A."/>
            <person name="Aubourg S."/>
            <person name="Chefdor F."/>
            <person name="Cooke R."/>
            <person name="Berger C."/>
            <person name="Monfort A."/>
            <person name="Casacuberta E."/>
            <person name="Gibbons T."/>
            <person name="Weber N."/>
            <person name="Vandenbol M."/>
            <person name="Bargues M."/>
            <person name="Terol J."/>
            <person name="Torres A."/>
            <person name="Perez-Perez A."/>
            <person name="Purnelle B."/>
            <person name="Bent E."/>
            <person name="Johnson S."/>
            <person name="Tacon D."/>
            <person name="Jesse T."/>
            <person name="Heijnen L."/>
            <person name="Schwarz S."/>
            <person name="Scholler P."/>
            <person name="Heber S."/>
            <person name="Francs P."/>
            <person name="Bielke C."/>
            <person name="Frishman D."/>
            <person name="Haase D."/>
            <person name="Lemcke K."/>
            <person name="Mewes H.-W."/>
            <person name="Stocker S."/>
            <person name="Zaccaria P."/>
            <person name="Bevan M."/>
            <person name="Wilson R.K."/>
            <person name="de la Bastide M."/>
            <person name="Habermann K."/>
            <person name="Parnell L."/>
            <person name="Dedhia N."/>
            <person name="Gnoj L."/>
            <person name="Schutz K."/>
            <person name="Huang E."/>
            <person name="Spiegel L."/>
            <person name="Sekhon M."/>
            <person name="Murray J."/>
            <person name="Sheet P."/>
            <person name="Cordes M."/>
            <person name="Abu-Threideh J."/>
            <person name="Stoneking T."/>
            <person name="Kalicki J."/>
            <person name="Graves T."/>
            <person name="Harmon G."/>
            <person name="Edwards J."/>
            <person name="Latreille P."/>
            <person name="Courtney L."/>
            <person name="Cloud J."/>
            <person name="Abbott A."/>
            <person name="Scott K."/>
            <person name="Johnson D."/>
            <person name="Minx P."/>
            <person name="Bentley D."/>
            <person name="Fulton B."/>
            <person name="Miller N."/>
            <person name="Greco T."/>
            <person name="Kemp K."/>
            <person name="Kramer J."/>
            <person name="Fulton L."/>
            <person name="Mardis E."/>
            <person name="Dante M."/>
            <person name="Pepin K."/>
            <person name="Hillier L.W."/>
            <person name="Nelson J."/>
            <person name="Spieth J."/>
            <person name="Ryan E."/>
            <person name="Andrews S."/>
            <person name="Geisel C."/>
            <person name="Layman D."/>
            <person name="Du H."/>
            <person name="Ali J."/>
            <person name="Berghoff A."/>
            <person name="Jones K."/>
            <person name="Drone K."/>
            <person name="Cotton M."/>
            <person name="Joshu C."/>
            <person name="Antonoiu B."/>
            <person name="Zidanic M."/>
            <person name="Strong C."/>
            <person name="Sun H."/>
            <person name="Lamar B."/>
            <person name="Yordan C."/>
            <person name="Ma P."/>
            <person name="Zhong J."/>
            <person name="Preston R."/>
            <person name="Vil D."/>
            <person name="Shekher M."/>
            <person name="Matero A."/>
            <person name="Shah R."/>
            <person name="Swaby I.K."/>
            <person name="O'Shaughnessy A."/>
            <person name="Rodriguez M."/>
            <person name="Hoffman J."/>
            <person name="Till S."/>
            <person name="Granat S."/>
            <person name="Shohdy N."/>
            <person name="Hasegawa A."/>
            <person name="Hameed A."/>
            <person name="Lodhi M."/>
            <person name="Johnson A."/>
            <person name="Chen E."/>
            <person name="Marra M.A."/>
            <person name="Martienssen R."/>
            <person name="McCombie W.R."/>
        </authorList>
    </citation>
    <scope>NUCLEOTIDE SEQUENCE [LARGE SCALE GENOMIC DNA]</scope>
    <source>
        <strain>cv. Columbia</strain>
    </source>
</reference>
<reference key="3">
    <citation type="journal article" date="2017" name="Plant J.">
        <title>Araport11: a complete reannotation of the Arabidopsis thaliana reference genome.</title>
        <authorList>
            <person name="Cheng C.Y."/>
            <person name="Krishnakumar V."/>
            <person name="Chan A.P."/>
            <person name="Thibaud-Nissen F."/>
            <person name="Schobel S."/>
            <person name="Town C.D."/>
        </authorList>
    </citation>
    <scope>GENOME REANNOTATION</scope>
    <source>
        <strain>cv. Columbia</strain>
    </source>
</reference>
<reference key="4">
    <citation type="journal article" date="2003" name="Science">
        <title>Empirical analysis of transcriptional activity in the Arabidopsis genome.</title>
        <authorList>
            <person name="Yamada K."/>
            <person name="Lim J."/>
            <person name="Dale J.M."/>
            <person name="Chen H."/>
            <person name="Shinn P."/>
            <person name="Palm C.J."/>
            <person name="Southwick A.M."/>
            <person name="Wu H.C."/>
            <person name="Kim C.J."/>
            <person name="Nguyen M."/>
            <person name="Pham P.K."/>
            <person name="Cheuk R.F."/>
            <person name="Karlin-Newmann G."/>
            <person name="Liu S.X."/>
            <person name="Lam B."/>
            <person name="Sakano H."/>
            <person name="Wu T."/>
            <person name="Yu G."/>
            <person name="Miranda M."/>
            <person name="Quach H.L."/>
            <person name="Tripp M."/>
            <person name="Chang C.H."/>
            <person name="Lee J.M."/>
            <person name="Toriumi M.J."/>
            <person name="Chan M.M."/>
            <person name="Tang C.C."/>
            <person name="Onodera C.S."/>
            <person name="Deng J.M."/>
            <person name="Akiyama K."/>
            <person name="Ansari Y."/>
            <person name="Arakawa T."/>
            <person name="Banh J."/>
            <person name="Banno F."/>
            <person name="Bowser L."/>
            <person name="Brooks S.Y."/>
            <person name="Carninci P."/>
            <person name="Chao Q."/>
            <person name="Choy N."/>
            <person name="Enju A."/>
            <person name="Goldsmith A.D."/>
            <person name="Gurjal M."/>
            <person name="Hansen N.F."/>
            <person name="Hayashizaki Y."/>
            <person name="Johnson-Hopson C."/>
            <person name="Hsuan V.W."/>
            <person name="Iida K."/>
            <person name="Karnes M."/>
            <person name="Khan S."/>
            <person name="Koesema E."/>
            <person name="Ishida J."/>
            <person name="Jiang P.X."/>
            <person name="Jones T."/>
            <person name="Kawai J."/>
            <person name="Kamiya A."/>
            <person name="Meyers C."/>
            <person name="Nakajima M."/>
            <person name="Narusaka M."/>
            <person name="Seki M."/>
            <person name="Sakurai T."/>
            <person name="Satou M."/>
            <person name="Tamse R."/>
            <person name="Vaysberg M."/>
            <person name="Wallender E.K."/>
            <person name="Wong C."/>
            <person name="Yamamura Y."/>
            <person name="Yuan S."/>
            <person name="Shinozaki K."/>
            <person name="Davis R.W."/>
            <person name="Theologis A."/>
            <person name="Ecker J.R."/>
        </authorList>
    </citation>
    <scope>NUCLEOTIDE SEQUENCE [LARGE SCALE MRNA]</scope>
    <source>
        <strain>cv. Columbia</strain>
    </source>
</reference>
<reference key="5">
    <citation type="journal article" date="2009" name="Plant Physiol.">
        <title>Large-scale Arabidopsis phosphoproteome profiling reveals novel chloroplast kinase substrates and phosphorylation networks.</title>
        <authorList>
            <person name="Reiland S."/>
            <person name="Messerli G."/>
            <person name="Baerenfaller K."/>
            <person name="Gerrits B."/>
            <person name="Endler A."/>
            <person name="Grossmann J."/>
            <person name="Gruissem W."/>
            <person name="Baginsky S."/>
        </authorList>
    </citation>
    <scope>PHOSPHORYLATION [LARGE SCALE ANALYSIS] AT SER-167</scope>
    <scope>IDENTIFICATION BY MASS SPECTROMETRY [LARGE SCALE ANALYSIS]</scope>
</reference>
<name>PIRL4_ARATH</name>